<name>OBG_MESH2</name>
<proteinExistence type="inferred from homology"/>
<evidence type="ECO:0000255" key="1">
    <source>
        <dbReference type="HAMAP-Rule" id="MF_01454"/>
    </source>
</evidence>
<evidence type="ECO:0000255" key="2">
    <source>
        <dbReference type="PROSITE-ProRule" id="PRU01229"/>
    </source>
</evidence>
<evidence type="ECO:0000255" key="3">
    <source>
        <dbReference type="PROSITE-ProRule" id="PRU01231"/>
    </source>
</evidence>
<keyword id="KW-0963">Cytoplasm</keyword>
<keyword id="KW-0342">GTP-binding</keyword>
<keyword id="KW-0378">Hydrolase</keyword>
<keyword id="KW-0460">Magnesium</keyword>
<keyword id="KW-0479">Metal-binding</keyword>
<keyword id="KW-0547">Nucleotide-binding</keyword>
<organism>
    <name type="scientific">Mesomycoplasma hyopneumoniae (strain 232)</name>
    <name type="common">Mycoplasma hyopneumoniae</name>
    <dbReference type="NCBI Taxonomy" id="295358"/>
    <lineage>
        <taxon>Bacteria</taxon>
        <taxon>Bacillati</taxon>
        <taxon>Mycoplasmatota</taxon>
        <taxon>Mycoplasmoidales</taxon>
        <taxon>Metamycoplasmataceae</taxon>
        <taxon>Mesomycoplasma</taxon>
    </lineage>
</organism>
<feature type="chain" id="PRO_0000386070" description="GTPase Obg">
    <location>
        <begin position="1"/>
        <end position="419"/>
    </location>
</feature>
<feature type="domain" description="Obg" evidence="3">
    <location>
        <begin position="1"/>
        <end position="156"/>
    </location>
</feature>
<feature type="domain" description="OBG-type G" evidence="1">
    <location>
        <begin position="157"/>
        <end position="334"/>
    </location>
</feature>
<feature type="domain" description="OCT" evidence="2">
    <location>
        <begin position="342"/>
        <end position="419"/>
    </location>
</feature>
<feature type="binding site" evidence="1">
    <location>
        <begin position="163"/>
        <end position="170"/>
    </location>
    <ligand>
        <name>GTP</name>
        <dbReference type="ChEBI" id="CHEBI:37565"/>
    </ligand>
</feature>
<feature type="binding site" evidence="1">
    <location>
        <position position="170"/>
    </location>
    <ligand>
        <name>Mg(2+)</name>
        <dbReference type="ChEBI" id="CHEBI:18420"/>
    </ligand>
</feature>
<feature type="binding site" evidence="1">
    <location>
        <begin position="188"/>
        <end position="192"/>
    </location>
    <ligand>
        <name>GTP</name>
        <dbReference type="ChEBI" id="CHEBI:37565"/>
    </ligand>
</feature>
<feature type="binding site" evidence="1">
    <location>
        <position position="190"/>
    </location>
    <ligand>
        <name>Mg(2+)</name>
        <dbReference type="ChEBI" id="CHEBI:18420"/>
    </ligand>
</feature>
<feature type="binding site" evidence="1">
    <location>
        <begin position="209"/>
        <end position="212"/>
    </location>
    <ligand>
        <name>GTP</name>
        <dbReference type="ChEBI" id="CHEBI:37565"/>
    </ligand>
</feature>
<feature type="binding site" evidence="1">
    <location>
        <begin position="278"/>
        <end position="281"/>
    </location>
    <ligand>
        <name>GTP</name>
        <dbReference type="ChEBI" id="CHEBI:37565"/>
    </ligand>
</feature>
<feature type="binding site" evidence="1">
    <location>
        <begin position="315"/>
        <end position="317"/>
    </location>
    <ligand>
        <name>GTP</name>
        <dbReference type="ChEBI" id="CHEBI:37565"/>
    </ligand>
</feature>
<reference key="1">
    <citation type="journal article" date="2004" name="J. Bacteriol.">
        <title>The genome sequence of Mycoplasma hyopneumoniae strain 232, the agent of swine mycoplasmosis.</title>
        <authorList>
            <person name="Minion F.C."/>
            <person name="Lefkowitz E.J."/>
            <person name="Madsen M.L."/>
            <person name="Cleary B.J."/>
            <person name="Swartzell S.M."/>
            <person name="Mahairas G.G."/>
        </authorList>
    </citation>
    <scope>NUCLEOTIDE SEQUENCE [LARGE SCALE GENOMIC DNA]</scope>
    <source>
        <strain>232</strain>
    </source>
</reference>
<dbReference type="EC" id="3.6.5.-" evidence="1"/>
<dbReference type="EMBL" id="AE017332">
    <property type="protein sequence ID" value="AAV27368.1"/>
    <property type="molecule type" value="Genomic_DNA"/>
</dbReference>
<dbReference type="RefSeq" id="WP_011205882.1">
    <property type="nucleotide sequence ID" value="NC_006360.1"/>
</dbReference>
<dbReference type="SMR" id="Q602A7"/>
<dbReference type="KEGG" id="mhy:mhp043"/>
<dbReference type="eggNOG" id="COG0536">
    <property type="taxonomic scope" value="Bacteria"/>
</dbReference>
<dbReference type="HOGENOM" id="CLU_011747_2_1_14"/>
<dbReference type="PhylomeDB" id="Q602A7"/>
<dbReference type="Proteomes" id="UP000006822">
    <property type="component" value="Chromosome"/>
</dbReference>
<dbReference type="GO" id="GO:0005737">
    <property type="term" value="C:cytoplasm"/>
    <property type="evidence" value="ECO:0007669"/>
    <property type="project" value="UniProtKB-SubCell"/>
</dbReference>
<dbReference type="GO" id="GO:0005525">
    <property type="term" value="F:GTP binding"/>
    <property type="evidence" value="ECO:0007669"/>
    <property type="project" value="UniProtKB-UniRule"/>
</dbReference>
<dbReference type="GO" id="GO:0003924">
    <property type="term" value="F:GTPase activity"/>
    <property type="evidence" value="ECO:0007669"/>
    <property type="project" value="UniProtKB-UniRule"/>
</dbReference>
<dbReference type="GO" id="GO:0000287">
    <property type="term" value="F:magnesium ion binding"/>
    <property type="evidence" value="ECO:0007669"/>
    <property type="project" value="InterPro"/>
</dbReference>
<dbReference type="GO" id="GO:0042254">
    <property type="term" value="P:ribosome biogenesis"/>
    <property type="evidence" value="ECO:0007669"/>
    <property type="project" value="UniProtKB-UniRule"/>
</dbReference>
<dbReference type="CDD" id="cd01898">
    <property type="entry name" value="Obg"/>
    <property type="match status" value="1"/>
</dbReference>
<dbReference type="FunFam" id="2.70.210.12:FF:000001">
    <property type="entry name" value="GTPase Obg"/>
    <property type="match status" value="1"/>
</dbReference>
<dbReference type="Gene3D" id="3.30.300.350">
    <property type="entry name" value="GTP-binding protein OBG, C-terminal domain"/>
    <property type="match status" value="1"/>
</dbReference>
<dbReference type="Gene3D" id="2.70.210.12">
    <property type="entry name" value="GTP1/OBG domain"/>
    <property type="match status" value="1"/>
</dbReference>
<dbReference type="Gene3D" id="3.40.50.300">
    <property type="entry name" value="P-loop containing nucleotide triphosphate hydrolases"/>
    <property type="match status" value="1"/>
</dbReference>
<dbReference type="HAMAP" id="MF_01454">
    <property type="entry name" value="GTPase_Obg"/>
    <property type="match status" value="1"/>
</dbReference>
<dbReference type="InterPro" id="IPR031167">
    <property type="entry name" value="G_OBG"/>
</dbReference>
<dbReference type="InterPro" id="IPR006073">
    <property type="entry name" value="GTP-bd"/>
</dbReference>
<dbReference type="InterPro" id="IPR014100">
    <property type="entry name" value="GTP-bd_Obg/CgtA"/>
</dbReference>
<dbReference type="InterPro" id="IPR036346">
    <property type="entry name" value="GTP-bd_prot_GTP1/OBG_C_sf"/>
</dbReference>
<dbReference type="InterPro" id="IPR006074">
    <property type="entry name" value="GTP1-OBG_CS"/>
</dbReference>
<dbReference type="InterPro" id="IPR006169">
    <property type="entry name" value="GTP1_OBG_dom"/>
</dbReference>
<dbReference type="InterPro" id="IPR036726">
    <property type="entry name" value="GTP1_OBG_dom_sf"/>
</dbReference>
<dbReference type="InterPro" id="IPR045086">
    <property type="entry name" value="OBG_GTPase"/>
</dbReference>
<dbReference type="InterPro" id="IPR015349">
    <property type="entry name" value="OCT_dom"/>
</dbReference>
<dbReference type="InterPro" id="IPR027417">
    <property type="entry name" value="P-loop_NTPase"/>
</dbReference>
<dbReference type="NCBIfam" id="TIGR02729">
    <property type="entry name" value="Obg_CgtA"/>
    <property type="match status" value="1"/>
</dbReference>
<dbReference type="NCBIfam" id="TIGR03595">
    <property type="entry name" value="Obg_CgtA_exten"/>
    <property type="match status" value="1"/>
</dbReference>
<dbReference type="NCBIfam" id="NF008955">
    <property type="entry name" value="PRK12297.1"/>
    <property type="match status" value="1"/>
</dbReference>
<dbReference type="NCBIfam" id="NF008956">
    <property type="entry name" value="PRK12299.1"/>
    <property type="match status" value="1"/>
</dbReference>
<dbReference type="PANTHER" id="PTHR11702">
    <property type="entry name" value="DEVELOPMENTALLY REGULATED GTP-BINDING PROTEIN-RELATED"/>
    <property type="match status" value="1"/>
</dbReference>
<dbReference type="PANTHER" id="PTHR11702:SF31">
    <property type="entry name" value="MITOCHONDRIAL RIBOSOME-ASSOCIATED GTPASE 2"/>
    <property type="match status" value="1"/>
</dbReference>
<dbReference type="Pfam" id="PF09269">
    <property type="entry name" value="DUF1967"/>
    <property type="match status" value="1"/>
</dbReference>
<dbReference type="Pfam" id="PF01018">
    <property type="entry name" value="GTP1_OBG"/>
    <property type="match status" value="1"/>
</dbReference>
<dbReference type="Pfam" id="PF01926">
    <property type="entry name" value="MMR_HSR1"/>
    <property type="match status" value="1"/>
</dbReference>
<dbReference type="PIRSF" id="PIRSF002401">
    <property type="entry name" value="GTP_bd_Obg/CgtA"/>
    <property type="match status" value="1"/>
</dbReference>
<dbReference type="PRINTS" id="PR00326">
    <property type="entry name" value="GTP1OBG"/>
</dbReference>
<dbReference type="SUPFAM" id="SSF102741">
    <property type="entry name" value="Obg GTP-binding protein C-terminal domain"/>
    <property type="match status" value="1"/>
</dbReference>
<dbReference type="SUPFAM" id="SSF82051">
    <property type="entry name" value="Obg GTP-binding protein N-terminal domain"/>
    <property type="match status" value="1"/>
</dbReference>
<dbReference type="SUPFAM" id="SSF52540">
    <property type="entry name" value="P-loop containing nucleoside triphosphate hydrolases"/>
    <property type="match status" value="1"/>
</dbReference>
<dbReference type="PROSITE" id="PS51710">
    <property type="entry name" value="G_OBG"/>
    <property type="match status" value="1"/>
</dbReference>
<dbReference type="PROSITE" id="PS00905">
    <property type="entry name" value="GTP1_OBG"/>
    <property type="match status" value="1"/>
</dbReference>
<dbReference type="PROSITE" id="PS51883">
    <property type="entry name" value="OBG"/>
    <property type="match status" value="1"/>
</dbReference>
<dbReference type="PROSITE" id="PS51881">
    <property type="entry name" value="OCT"/>
    <property type="match status" value="1"/>
</dbReference>
<protein>
    <recommendedName>
        <fullName evidence="1">GTPase Obg</fullName>
        <ecNumber evidence="1">3.6.5.-</ecNumber>
    </recommendedName>
    <alternativeName>
        <fullName evidence="1">GTP-binding protein Obg</fullName>
    </alternativeName>
</protein>
<gene>
    <name evidence="1" type="primary">obg</name>
    <name type="ordered locus">mhp043</name>
</gene>
<sequence length="419" mass="47002">MRFVDYVSIEVVAGKGGDGIISFRREAHVDKGGPDGGDGGWGGSIYFVGDSGMNTLLPFYQTKKIFGYNGENGRPKRQTGANGKDIFIKVPLGTQVFLKKSLICDIILEKKYLIAKGGRGGLGNFHFRNSKNKAPRISENGELGQNFYLDLQLKVMADIGLVGKPNAGKSTLLSLISNSKPKIANYEFTTLVPQLGVVKIYENSFVTADLPGLIQGASSGKGMGIIFLKHIERCRAIVHVIDFGSDNKNPIKDFIEIKSELEKFNKKLLDLNQIVIANKCDLPNFQFNLANFKRKFPKIKIIKSSLISAKQNEINIIKEKMFGLLEEKQKKLEIQEINTSKIEFNLKAPFLIKSRNNGFFEITGELIQKIIQKIPLNSQENILRFNAKVKKIGLWDELIKKGIKPGDLVRIYEFEFHWN</sequence>
<comment type="function">
    <text evidence="1">An essential GTPase which binds GTP, GDP and possibly (p)ppGpp with moderate affinity, with high nucleotide exchange rates and a fairly low GTP hydrolysis rate. Plays a role in control of the cell cycle, stress response, ribosome biogenesis and in those bacteria that undergo differentiation, in morphogenesis control.</text>
</comment>
<comment type="cofactor">
    <cofactor evidence="1">
        <name>Mg(2+)</name>
        <dbReference type="ChEBI" id="CHEBI:18420"/>
    </cofactor>
</comment>
<comment type="subunit">
    <text evidence="1">Monomer.</text>
</comment>
<comment type="subcellular location">
    <subcellularLocation>
        <location evidence="1">Cytoplasm</location>
    </subcellularLocation>
</comment>
<comment type="similarity">
    <text evidence="1">Belongs to the TRAFAC class OBG-HflX-like GTPase superfamily. OBG GTPase family.</text>
</comment>
<accession>Q602A7</accession>